<keyword id="KW-0223">Dioxygenase</keyword>
<keyword id="KW-0903">Direct protein sequencing</keyword>
<keyword id="KW-0408">Iron</keyword>
<keyword id="KW-0560">Oxidoreductase</keyword>
<evidence type="ECO:0000255" key="1"/>
<evidence type="ECO:0000269" key="2">
    <source>
    </source>
</evidence>
<evidence type="ECO:0000305" key="3"/>
<protein>
    <recommendedName>
        <fullName>1-hydroxy-2-naphthoate 1,2-dioxygenasee</fullName>
        <ecNumber>1.13.11.38</ecNumber>
    </recommendedName>
    <alternativeName>
        <fullName>1-hydroxy-2-naphthoate-degrading enzyme</fullName>
    </alternativeName>
    <alternativeName>
        <fullName>1-hydroxy-2-naphthoic acid dioxygenase</fullName>
    </alternativeName>
</protein>
<name>PHDI_NOCSK</name>
<gene>
    <name type="primary">phdI</name>
</gene>
<proteinExistence type="evidence at protein level"/>
<organism>
    <name type="scientific">Nocardioides sp. (strain KP7)</name>
    <dbReference type="NCBI Taxonomy" id="102632"/>
    <lineage>
        <taxon>Bacteria</taxon>
        <taxon>Bacillati</taxon>
        <taxon>Actinomycetota</taxon>
        <taxon>Actinomycetes</taxon>
        <taxon>Propionibacteriales</taxon>
        <taxon>Nocardioidaceae</taxon>
        <taxon>Nocardioides</taxon>
    </lineage>
</organism>
<reference key="1">
    <citation type="journal article" date="1997" name="J. Bacteriol.">
        <title>Biochemical and genetic characterization of 2-carboxybenzaldehyde dehydrogenase, an enzyme involved in phenanthrene degradation by Nocardioides sp. strain KP7.</title>
        <authorList>
            <person name="Iwabuchi T."/>
            <person name="Harayama S."/>
        </authorList>
    </citation>
    <scope>NUCLEOTIDE SEQUENCE [GENOMIC DNA]</scope>
    <source>
        <strain>KP7</strain>
    </source>
</reference>
<reference key="2">
    <citation type="journal article" date="1998" name="J. Biol. Chem.">
        <title>Biochemical and molecular characterization of 1-hydroxy-2-naphthoate dioxygenase from Nocardioides sp. KP7.</title>
        <authorList>
            <person name="Iwabuchi T."/>
            <person name="Harayama S."/>
        </authorList>
    </citation>
    <scope>NUCLEOTIDE SEQUENCE [GENOMIC DNA]</scope>
    <scope>PROTEIN SEQUENCE OF 2-56</scope>
    <scope>FUNCTION</scope>
    <scope>COFACTOR</scope>
    <scope>CATALYTIC ACTIVITY</scope>
    <scope>BIOPHYSICOCHEMICAL PROPERTIES</scope>
    <scope>SUBUNIT</scope>
    <source>
        <strain>KP7</strain>
    </source>
</reference>
<reference key="3">
    <citation type="journal article" date="2014" name="PLoS ONE">
        <title>Finding sequences for over 270 orphan enzymes.</title>
        <authorList>
            <person name="Shearer A.G."/>
            <person name="Altman T."/>
            <person name="Rhee C.D."/>
        </authorList>
    </citation>
    <scope>IDENTIFICATION</scope>
</reference>
<sequence length="387" mass="43082">MNSSNTGAPEAAQAATLEAFDRRAAEQYLRGQWIAEEHLMRAIGGPRPAGIPYRWEWKSVEVALDEATIALGPVDTARRHLTFVNPGLMDRGSATTHTISAGFQLVKPGEVCWSHRHTMSAVRFVTKGHPDAFTAVDGERLPMEDFDLLITPRFSWHDHHNSGDADVVWLDGLDIGLLQSLGAVFYEPYGDDSQNVRPSSSEGIGTRSHWLRPTWERGRESRLPIRYPWKEVNARLDVYDLDAGTPYDGLALRYANPVTGGPTMATMDCWVQRLAPGFDGKSHRRSSSAITYVISGSGTMVTEDETITFNRGDVISLPNWTNFRWTNDSEIEPVLLFSMHDIPALEAFGLLYEEPEAILNATPAPINPTPSLNPIYRPGAFYDQDEL</sequence>
<dbReference type="EC" id="1.13.11.38"/>
<dbReference type="EMBL" id="D89987">
    <property type="protein sequence ID" value="BAA31235.2"/>
    <property type="molecule type" value="Genomic_DNA"/>
</dbReference>
<dbReference type="EMBL" id="AB000735">
    <property type="protein sequence ID" value="BAA23262.1"/>
    <property type="molecule type" value="Genomic_DNA"/>
</dbReference>
<dbReference type="SMR" id="O24721"/>
<dbReference type="BRENDA" id="1.13.11.38">
    <property type="organism ID" value="4363"/>
</dbReference>
<dbReference type="GO" id="GO:0018582">
    <property type="term" value="F:1-hydroxy-2-naphthoate 1,2-dioxygenase activity"/>
    <property type="evidence" value="ECO:0000314"/>
    <property type="project" value="UniProtKB"/>
</dbReference>
<dbReference type="GO" id="GO:0005506">
    <property type="term" value="F:iron ion binding"/>
    <property type="evidence" value="ECO:0000314"/>
    <property type="project" value="UniProtKB"/>
</dbReference>
<dbReference type="GO" id="GO:0042216">
    <property type="term" value="P:phenanthrene catabolic process"/>
    <property type="evidence" value="ECO:0000314"/>
    <property type="project" value="UniProtKB"/>
</dbReference>
<dbReference type="GO" id="GO:0051260">
    <property type="term" value="P:protein homooligomerization"/>
    <property type="evidence" value="ECO:0000314"/>
    <property type="project" value="UniProtKB"/>
</dbReference>
<dbReference type="CDD" id="cd06992">
    <property type="entry name" value="cupin_GDO-like_C"/>
    <property type="match status" value="1"/>
</dbReference>
<dbReference type="CDD" id="cd02216">
    <property type="entry name" value="cupin_GDO-like_N"/>
    <property type="match status" value="1"/>
</dbReference>
<dbReference type="FunFam" id="2.60.120.10:FF:000274">
    <property type="entry name" value="Gentisate 1,2-dioxygenase"/>
    <property type="match status" value="1"/>
</dbReference>
<dbReference type="Gene3D" id="2.60.120.10">
    <property type="entry name" value="Jelly Rolls"/>
    <property type="match status" value="1"/>
</dbReference>
<dbReference type="InterPro" id="IPR013096">
    <property type="entry name" value="Cupin_2"/>
</dbReference>
<dbReference type="InterPro" id="IPR047183">
    <property type="entry name" value="GDO-like"/>
</dbReference>
<dbReference type="InterPro" id="IPR014710">
    <property type="entry name" value="RmlC-like_jellyroll"/>
</dbReference>
<dbReference type="InterPro" id="IPR011051">
    <property type="entry name" value="RmlC_Cupin_sf"/>
</dbReference>
<dbReference type="PANTHER" id="PTHR41517">
    <property type="entry name" value="1,2-DIOXYGENASE PROTEIN-RELATED"/>
    <property type="match status" value="1"/>
</dbReference>
<dbReference type="PANTHER" id="PTHR41517:SF1">
    <property type="entry name" value="CUPIN"/>
    <property type="match status" value="1"/>
</dbReference>
<dbReference type="Pfam" id="PF07883">
    <property type="entry name" value="Cupin_2"/>
    <property type="match status" value="2"/>
</dbReference>
<dbReference type="SUPFAM" id="SSF51182">
    <property type="entry name" value="RmlC-like cupins"/>
    <property type="match status" value="1"/>
</dbReference>
<feature type="initiator methionine" description="Removed" evidence="2">
    <location>
        <position position="1"/>
    </location>
</feature>
<feature type="chain" id="PRO_0000430446" description="1-hydroxy-2-naphthoate 1,2-dioxygenasee">
    <location>
        <begin position="2"/>
        <end position="387"/>
    </location>
</feature>
<feature type="domain" description="Cupin type-2 1" evidence="1">
    <location>
        <begin position="103"/>
        <end position="171"/>
    </location>
</feature>
<feature type="domain" description="Cupin type-2 2" evidence="1">
    <location>
        <begin position="271"/>
        <end position="337"/>
    </location>
</feature>
<feature type="sequence conflict" description="In Ref. 2; AA sequence." evidence="3" ref="2">
    <location>
        <position position="12"/>
    </location>
</feature>
<feature type="sequence conflict" description="In Ref. 2; AA sequence." evidence="3" ref="2">
    <location>
        <position position="54"/>
    </location>
</feature>
<feature type="sequence conflict" description="In Ref. 2; BAA23262." evidence="3" ref="2">
    <original>A</original>
    <variation>G</variation>
    <location>
        <position position="183"/>
    </location>
</feature>
<feature type="sequence conflict" description="In Ref. 2; BAA23262." evidence="3" ref="2">
    <original>L</original>
    <variation>F</variation>
    <location>
        <position position="350"/>
    </location>
</feature>
<feature type="sequence conflict" description="In Ref. 2; BAA23262." evidence="3" ref="2">
    <original>P</original>
    <variation>A</variation>
    <location>
        <position position="378"/>
    </location>
</feature>
<comment type="function">
    <text evidence="2">Dioxygenase involved in phenanthrene catabolism by mediating cleavage of 1-hydroxy-2-naphthoate.</text>
</comment>
<comment type="catalytic activity">
    <reaction evidence="2">
        <text>1-hydroxy-2-naphthoate + O2 = (3Z)-4-(2-carboxyphenyl)-2-oxobut-3-enoate + H(+)</text>
        <dbReference type="Rhea" id="RHEA:14749"/>
        <dbReference type="ChEBI" id="CHEBI:15378"/>
        <dbReference type="ChEBI" id="CHEBI:15379"/>
        <dbReference type="ChEBI" id="CHEBI:15992"/>
        <dbReference type="ChEBI" id="CHEBI:58794"/>
        <dbReference type="EC" id="1.13.11.38"/>
    </reaction>
</comment>
<comment type="cofactor">
    <cofactor evidence="2">
        <name>Fe(2+)</name>
        <dbReference type="ChEBI" id="CHEBI:29033"/>
    </cofactor>
</comment>
<comment type="biophysicochemical properties">
    <kinetics>
        <KM evidence="2">10 uM for 1-hydroxy-2-naphthoate</KM>
        <text>kcat is 114 sec(-1) for 1-hydroxy-2-naphthoate.</text>
    </kinetics>
    <phDependence>
        <text evidence="2">Optimum pH is 7.5.</text>
    </phDependence>
</comment>
<comment type="subunit">
    <text evidence="2">Homohexamer.</text>
</comment>
<accession>O24721</accession>
<accession>Q9FBF3</accession>